<dbReference type="EMBL" id="AF098483">
    <property type="protein sequence ID" value="AAC97946.1"/>
    <property type="molecule type" value="mRNA"/>
</dbReference>
<dbReference type="EMBL" id="AF098482">
    <property type="protein sequence ID" value="AAC97945.1"/>
    <property type="molecule type" value="mRNA"/>
</dbReference>
<dbReference type="EMBL" id="AF063020">
    <property type="protein sequence ID" value="AAC25167.1"/>
    <property type="molecule type" value="mRNA"/>
</dbReference>
<dbReference type="EMBL" id="AF199339">
    <property type="protein sequence ID" value="AAF25870.1"/>
    <property type="molecule type" value="Genomic_DNA"/>
</dbReference>
<dbReference type="EMBL" id="AF199339">
    <property type="protein sequence ID" value="AAF25871.1"/>
    <property type="molecule type" value="Genomic_DNA"/>
</dbReference>
<dbReference type="EMBL" id="AF432220">
    <property type="protein sequence ID" value="AAL99926.1"/>
    <property type="molecule type" value="mRNA"/>
</dbReference>
<dbReference type="EMBL" id="AL359998">
    <property type="status" value="NOT_ANNOTATED_CDS"/>
    <property type="molecule type" value="Genomic_DNA"/>
</dbReference>
<dbReference type="EMBL" id="AL441925">
    <property type="status" value="NOT_ANNOTATED_CDS"/>
    <property type="molecule type" value="Genomic_DNA"/>
</dbReference>
<dbReference type="EMBL" id="AL513423">
    <property type="status" value="NOT_ANNOTATED_CDS"/>
    <property type="molecule type" value="Genomic_DNA"/>
</dbReference>
<dbReference type="EMBL" id="CH471071">
    <property type="protein sequence ID" value="EAW58677.1"/>
    <property type="molecule type" value="Genomic_DNA"/>
</dbReference>
<dbReference type="EMBL" id="CH471071">
    <property type="protein sequence ID" value="EAW58678.1"/>
    <property type="molecule type" value="Genomic_DNA"/>
</dbReference>
<dbReference type="EMBL" id="CH471071">
    <property type="protein sequence ID" value="EAW58679.1"/>
    <property type="molecule type" value="Genomic_DNA"/>
</dbReference>
<dbReference type="EMBL" id="BC044568">
    <property type="protein sequence ID" value="AAH44568.2"/>
    <property type="molecule type" value="mRNA"/>
</dbReference>
<dbReference type="EMBL" id="BC064135">
    <property type="protein sequence ID" value="AAH64135.1"/>
    <property type="molecule type" value="mRNA"/>
</dbReference>
<dbReference type="EMBL" id="U94319">
    <property type="protein sequence ID" value="AAB52589.1"/>
    <property type="molecule type" value="mRNA"/>
</dbReference>
<dbReference type="CCDS" id="CCDS6479.1">
    <molecule id="O75475-1"/>
</dbReference>
<dbReference type="CCDS" id="CCDS6480.1">
    <molecule id="O75475-2"/>
</dbReference>
<dbReference type="CCDS" id="CCDS83348.1">
    <molecule id="O75475-3"/>
</dbReference>
<dbReference type="PIR" id="JC7168">
    <property type="entry name" value="JC7168"/>
</dbReference>
<dbReference type="RefSeq" id="NP_001121689.1">
    <molecule id="O75475-1"/>
    <property type="nucleotide sequence ID" value="NM_001128217.3"/>
</dbReference>
<dbReference type="RefSeq" id="NP_001304827.1">
    <molecule id="O75475-3"/>
    <property type="nucleotide sequence ID" value="NM_001317898.3"/>
</dbReference>
<dbReference type="RefSeq" id="NP_001304829.1">
    <property type="nucleotide sequence ID" value="NM_001317900.1"/>
</dbReference>
<dbReference type="RefSeq" id="NP_066967.3">
    <molecule id="O75475-2"/>
    <property type="nucleotide sequence ID" value="NM_021144.3"/>
</dbReference>
<dbReference type="RefSeq" id="NP_150091.2">
    <molecule id="O75475-1"/>
    <property type="nucleotide sequence ID" value="NM_033222.4"/>
</dbReference>
<dbReference type="RefSeq" id="XP_024303168.1">
    <molecule id="O75475-2"/>
    <property type="nucleotide sequence ID" value="XM_024447400.2"/>
</dbReference>
<dbReference type="RefSeq" id="XP_024303170.1">
    <molecule id="O75475-3"/>
    <property type="nucleotide sequence ID" value="XM_024447402.2"/>
</dbReference>
<dbReference type="RefSeq" id="XP_047278659.1">
    <molecule id="O75475-2"/>
    <property type="nucleotide sequence ID" value="XM_047422703.1"/>
</dbReference>
<dbReference type="RefSeq" id="XP_054217847.1">
    <molecule id="O75475-2"/>
    <property type="nucleotide sequence ID" value="XM_054361872.1"/>
</dbReference>
<dbReference type="RefSeq" id="XP_054217848.1">
    <molecule id="O75475-2"/>
    <property type="nucleotide sequence ID" value="XM_054361873.1"/>
</dbReference>
<dbReference type="RefSeq" id="XP_054217851.1">
    <molecule id="O75475-3"/>
    <property type="nucleotide sequence ID" value="XM_054361876.1"/>
</dbReference>
<dbReference type="PDB" id="1Z9E">
    <property type="method" value="NMR"/>
    <property type="chains" value="A=347-471"/>
</dbReference>
<dbReference type="PDB" id="2B4J">
    <property type="method" value="X-ray"/>
    <property type="resolution" value="2.02 A"/>
    <property type="chains" value="C/D=347-442"/>
</dbReference>
<dbReference type="PDB" id="2M16">
    <property type="method" value="NMR"/>
    <property type="chains" value="A=1-93"/>
</dbReference>
<dbReference type="PDB" id="2MSR">
    <property type="method" value="NMR"/>
    <property type="chains" value="B=344-426"/>
</dbReference>
<dbReference type="PDB" id="2MTN">
    <property type="method" value="NMR"/>
    <property type="chains" value="A=337-442"/>
</dbReference>
<dbReference type="PDB" id="2N3A">
    <property type="method" value="NMR"/>
    <property type="chains" value="B=348-426"/>
</dbReference>
<dbReference type="PDB" id="3F9K">
    <property type="method" value="X-ray"/>
    <property type="resolution" value="3.20 A"/>
    <property type="chains" value="C/G/K/O/S/W/a/e/i/m/q/u=347-435"/>
</dbReference>
<dbReference type="PDB" id="3HPG">
    <property type="method" value="X-ray"/>
    <property type="resolution" value="3.28 A"/>
    <property type="chains" value="G/H/I/J/K/L=347-435"/>
</dbReference>
<dbReference type="PDB" id="3HPH">
    <property type="method" value="X-ray"/>
    <property type="resolution" value="2.64 A"/>
    <property type="chains" value="E/F/G/H=348-435"/>
</dbReference>
<dbReference type="PDB" id="3U88">
    <property type="method" value="X-ray"/>
    <property type="resolution" value="3.00 A"/>
    <property type="chains" value="C/D=347-435"/>
</dbReference>
<dbReference type="PDB" id="3ZEH">
    <property type="method" value="NMR"/>
    <property type="chains" value="A=3-100"/>
</dbReference>
<dbReference type="PDB" id="4FU6">
    <property type="method" value="X-ray"/>
    <property type="resolution" value="2.10 A"/>
    <property type="chains" value="A=1-135"/>
</dbReference>
<dbReference type="PDB" id="5N88">
    <property type="method" value="X-ray"/>
    <property type="resolution" value="1.70 A"/>
    <property type="chains" value="D=347-425, E=347-424"/>
</dbReference>
<dbReference type="PDB" id="5OYM">
    <property type="method" value="X-ray"/>
    <property type="resolution" value="2.05 A"/>
    <property type="chains" value="A/B/C/D/E/F/G/H=345-431"/>
</dbReference>
<dbReference type="PDB" id="5YI9">
    <property type="method" value="NMR"/>
    <property type="chains" value="A=345-442"/>
</dbReference>
<dbReference type="PDB" id="6EMO">
    <property type="method" value="NMR"/>
    <property type="chains" value="A=345-442"/>
</dbReference>
<dbReference type="PDB" id="6EMP">
    <property type="method" value="NMR"/>
    <property type="chains" value="A=345-442"/>
</dbReference>
<dbReference type="PDB" id="6EMQ">
    <property type="method" value="NMR"/>
    <property type="chains" value="A=345-443"/>
</dbReference>
<dbReference type="PDB" id="6EMR">
    <property type="method" value="NMR"/>
    <property type="chains" value="A=345-442"/>
</dbReference>
<dbReference type="PDB" id="6S01">
    <property type="method" value="EM"/>
    <property type="resolution" value="3.20 A"/>
    <property type="chains" value="K=1-530"/>
</dbReference>
<dbReference type="PDB" id="6TRJ">
    <property type="method" value="X-ray"/>
    <property type="resolution" value="1.30 A"/>
    <property type="chains" value="A=345-430"/>
</dbReference>
<dbReference type="PDB" id="6TVM">
    <property type="method" value="NMR"/>
    <property type="chains" value="A/B=345-467"/>
</dbReference>
<dbReference type="PDB" id="6ZV0">
    <property type="method" value="NMR"/>
    <property type="chains" value="A=345-431"/>
</dbReference>
<dbReference type="PDB" id="7OUF">
    <property type="method" value="EM"/>
    <property type="resolution" value="3.00 A"/>
    <property type="chains" value="C/F=1-325"/>
</dbReference>
<dbReference type="PDB" id="7OUG">
    <property type="method" value="EM"/>
    <property type="resolution" value="3.10 A"/>
    <property type="chains" value="C/F=1-325"/>
</dbReference>
<dbReference type="PDB" id="7OUH">
    <property type="method" value="EM"/>
    <property type="resolution" value="3.50 A"/>
    <property type="chains" value="C/F=1-325"/>
</dbReference>
<dbReference type="PDB" id="7PEL">
    <property type="method" value="EM"/>
    <property type="resolution" value="3.34 A"/>
    <property type="chains" value="C/F=1-325"/>
</dbReference>
<dbReference type="PDB" id="7Z1Z">
    <property type="method" value="EM"/>
    <property type="resolution" value="3.50 A"/>
    <property type="chains" value="Q/R=347-435"/>
</dbReference>
<dbReference type="PDB" id="8CBN">
    <property type="method" value="EM"/>
    <property type="resolution" value="3.34 A"/>
    <property type="chains" value="K/L=1-530"/>
</dbReference>
<dbReference type="PDB" id="8CBQ">
    <property type="method" value="EM"/>
    <property type="resolution" value="4.00 A"/>
    <property type="chains" value="K=1-530"/>
</dbReference>
<dbReference type="PDB" id="8PC5">
    <property type="method" value="EM"/>
    <property type="resolution" value="3.04 A"/>
    <property type="chains" value="K=1-530"/>
</dbReference>
<dbReference type="PDB" id="8PC6">
    <property type="method" value="EM"/>
    <property type="resolution" value="3.02 A"/>
    <property type="chains" value="K=1-530"/>
</dbReference>
<dbReference type="PDB" id="8PEO">
    <property type="method" value="EM"/>
    <property type="resolution" value="2.69 A"/>
    <property type="chains" value="K=1-530"/>
</dbReference>
<dbReference type="PDB" id="8PEP">
    <property type="method" value="EM"/>
    <property type="resolution" value="3.33 A"/>
    <property type="chains" value="K=1-530"/>
</dbReference>
<dbReference type="PDBsum" id="1Z9E"/>
<dbReference type="PDBsum" id="2B4J"/>
<dbReference type="PDBsum" id="2M16"/>
<dbReference type="PDBsum" id="2MSR"/>
<dbReference type="PDBsum" id="2MTN"/>
<dbReference type="PDBsum" id="2N3A"/>
<dbReference type="PDBsum" id="3F9K"/>
<dbReference type="PDBsum" id="3HPG"/>
<dbReference type="PDBsum" id="3HPH"/>
<dbReference type="PDBsum" id="3U88"/>
<dbReference type="PDBsum" id="3ZEH"/>
<dbReference type="PDBsum" id="4FU6"/>
<dbReference type="PDBsum" id="5N88"/>
<dbReference type="PDBsum" id="5OYM"/>
<dbReference type="PDBsum" id="5YI9"/>
<dbReference type="PDBsum" id="6EMO"/>
<dbReference type="PDBsum" id="6EMP"/>
<dbReference type="PDBsum" id="6EMQ"/>
<dbReference type="PDBsum" id="6EMR"/>
<dbReference type="PDBsum" id="6S01"/>
<dbReference type="PDBsum" id="6TRJ"/>
<dbReference type="PDBsum" id="6TVM"/>
<dbReference type="PDBsum" id="6ZV0"/>
<dbReference type="PDBsum" id="7OUF"/>
<dbReference type="PDBsum" id="7OUG"/>
<dbReference type="PDBsum" id="7OUH"/>
<dbReference type="PDBsum" id="7PEL"/>
<dbReference type="PDBsum" id="7Z1Z"/>
<dbReference type="PDBsum" id="8CBN"/>
<dbReference type="PDBsum" id="8CBQ"/>
<dbReference type="PDBsum" id="8PC5"/>
<dbReference type="PDBsum" id="8PC6"/>
<dbReference type="PDBsum" id="8PEO"/>
<dbReference type="PDBsum" id="8PEP"/>
<dbReference type="BMRB" id="O75475"/>
<dbReference type="EMDB" id="EMD-10069"/>
<dbReference type="EMDB" id="EMD-14453"/>
<dbReference type="EMDB" id="EMD-16546"/>
<dbReference type="EMDB" id="EMD-16549"/>
<dbReference type="EMDB" id="EMD-17594"/>
<dbReference type="EMDB" id="EMD-17595"/>
<dbReference type="EMDB" id="EMD-17633"/>
<dbReference type="EMDB" id="EMD-17634"/>
<dbReference type="EMDB" id="EMD-8483"/>
<dbReference type="SMR" id="O75475"/>
<dbReference type="BioGRID" id="116339">
    <property type="interactions" value="209"/>
</dbReference>
<dbReference type="CORUM" id="O75475"/>
<dbReference type="DIP" id="DIP-46656N"/>
<dbReference type="FunCoup" id="O75475">
    <property type="interactions" value="3865"/>
</dbReference>
<dbReference type="IntAct" id="O75475">
    <property type="interactions" value="59"/>
</dbReference>
<dbReference type="MINT" id="O75475"/>
<dbReference type="STRING" id="9606.ENSP00000370114"/>
<dbReference type="BindingDB" id="O75475"/>
<dbReference type="ChEMBL" id="CHEMBL3988590"/>
<dbReference type="Allergome" id="2120">
    <property type="allergen name" value="Hom s DSF70"/>
</dbReference>
<dbReference type="GlyCosmos" id="O75475">
    <property type="glycosylation" value="2 sites, 2 glycans"/>
</dbReference>
<dbReference type="GlyGen" id="O75475">
    <property type="glycosylation" value="2 sites, 2 O-linked glycans (2 sites)"/>
</dbReference>
<dbReference type="iPTMnet" id="O75475"/>
<dbReference type="MetOSite" id="O75475"/>
<dbReference type="PhosphoSitePlus" id="O75475"/>
<dbReference type="SwissPalm" id="O75475"/>
<dbReference type="BioMuta" id="PSIP1"/>
<dbReference type="jPOST" id="O75475"/>
<dbReference type="MassIVE" id="O75475"/>
<dbReference type="PaxDb" id="9606-ENSP00000370109"/>
<dbReference type="PeptideAtlas" id="O75475"/>
<dbReference type="ProteomicsDB" id="50037">
    <molecule id="O75475-1"/>
</dbReference>
<dbReference type="ProteomicsDB" id="50038">
    <molecule id="O75475-2"/>
</dbReference>
<dbReference type="Pumba" id="O75475"/>
<dbReference type="TopDownProteomics" id="O75475-1">
    <molecule id="O75475-1"/>
</dbReference>
<dbReference type="TopDownProteomics" id="O75475-2">
    <molecule id="O75475-2"/>
</dbReference>
<dbReference type="ABCD" id="O75475">
    <property type="antibodies" value="2 sequenced antibodies"/>
</dbReference>
<dbReference type="Antibodypedia" id="4436">
    <property type="antibodies" value="248 antibodies from 33 providers"/>
</dbReference>
<dbReference type="DNASU" id="11168"/>
<dbReference type="Ensembl" id="ENST00000380715.5">
    <molecule id="O75475-3"/>
    <property type="protein sequence ID" value="ENSP00000370091.1"/>
    <property type="gene ID" value="ENSG00000164985.15"/>
</dbReference>
<dbReference type="Ensembl" id="ENST00000380716.8">
    <molecule id="O75475-2"/>
    <property type="protein sequence ID" value="ENSP00000370092.4"/>
    <property type="gene ID" value="ENSG00000164985.15"/>
</dbReference>
<dbReference type="Ensembl" id="ENST00000380733.9">
    <molecule id="O75475-1"/>
    <property type="protein sequence ID" value="ENSP00000370109.4"/>
    <property type="gene ID" value="ENSG00000164985.15"/>
</dbReference>
<dbReference type="Ensembl" id="ENST00000380738.8">
    <molecule id="O75475-1"/>
    <property type="protein sequence ID" value="ENSP00000370114.4"/>
    <property type="gene ID" value="ENSG00000164985.15"/>
</dbReference>
<dbReference type="Ensembl" id="ENST00000397519.6">
    <molecule id="O75475-2"/>
    <property type="protein sequence ID" value="ENSP00000380653.2"/>
    <property type="gene ID" value="ENSG00000164985.15"/>
</dbReference>
<dbReference type="GeneID" id="11168"/>
<dbReference type="KEGG" id="hsa:11168"/>
<dbReference type="MANE-Select" id="ENST00000380733.9">
    <property type="protein sequence ID" value="ENSP00000370109.4"/>
    <property type="RefSeq nucleotide sequence ID" value="NM_033222.5"/>
    <property type="RefSeq protein sequence ID" value="NP_150091.2"/>
</dbReference>
<dbReference type="UCSC" id="uc003zlv.6">
    <molecule id="O75475-1"/>
    <property type="organism name" value="human"/>
</dbReference>
<dbReference type="AGR" id="HGNC:9527"/>
<dbReference type="CTD" id="11168"/>
<dbReference type="DisGeNET" id="11168"/>
<dbReference type="GeneCards" id="PSIP1"/>
<dbReference type="HGNC" id="HGNC:9527">
    <property type="gene designation" value="PSIP1"/>
</dbReference>
<dbReference type="HPA" id="ENSG00000164985">
    <property type="expression patterns" value="Low tissue specificity"/>
</dbReference>
<dbReference type="MIM" id="603620">
    <property type="type" value="gene"/>
</dbReference>
<dbReference type="neXtProt" id="NX_O75475"/>
<dbReference type="OpenTargets" id="ENSG00000164985"/>
<dbReference type="PharmGKB" id="PA33872"/>
<dbReference type="VEuPathDB" id="HostDB:ENSG00000164985"/>
<dbReference type="eggNOG" id="KOG1904">
    <property type="taxonomic scope" value="Eukaryota"/>
</dbReference>
<dbReference type="GeneTree" id="ENSGT00940000154706"/>
<dbReference type="HOGENOM" id="CLU_034054_1_0_1"/>
<dbReference type="InParanoid" id="O75475"/>
<dbReference type="OMA" id="HKKFFAG"/>
<dbReference type="OrthoDB" id="62853at2759"/>
<dbReference type="PAN-GO" id="O75475">
    <property type="GO annotations" value="4 GO annotations based on evolutionary models"/>
</dbReference>
<dbReference type="PhylomeDB" id="O75475"/>
<dbReference type="TreeFam" id="TF105385"/>
<dbReference type="PathwayCommons" id="O75475"/>
<dbReference type="Reactome" id="R-HSA-162592">
    <property type="pathway name" value="Integration of provirus"/>
</dbReference>
<dbReference type="Reactome" id="R-HSA-164843">
    <property type="pathway name" value="2-LTR circle formation"/>
</dbReference>
<dbReference type="Reactome" id="R-HSA-175567">
    <property type="pathway name" value="Integration of viral DNA into host genomic DNA"/>
</dbReference>
<dbReference type="Reactome" id="R-HSA-177539">
    <property type="pathway name" value="Autointegration results in viral DNA circles"/>
</dbReference>
<dbReference type="Reactome" id="R-HSA-180689">
    <property type="pathway name" value="APOBEC3G mediated resistance to HIV-1 infection"/>
</dbReference>
<dbReference type="Reactome" id="R-HSA-180910">
    <property type="pathway name" value="Vpr-mediated nuclear import of PICs"/>
</dbReference>
<dbReference type="Reactome" id="R-HSA-9772755">
    <property type="pathway name" value="Formation of WDR5-containing histone-modifying complexes"/>
</dbReference>
<dbReference type="SignaLink" id="O75475"/>
<dbReference type="SIGNOR" id="O75475"/>
<dbReference type="BioGRID-ORCS" id="11168">
    <property type="hits" value="41 hits in 1170 CRISPR screens"/>
</dbReference>
<dbReference type="ChiTaRS" id="PSIP1">
    <property type="organism name" value="human"/>
</dbReference>
<dbReference type="EvolutionaryTrace" id="O75475"/>
<dbReference type="GeneWiki" id="PSIP1"/>
<dbReference type="GenomeRNAi" id="11168"/>
<dbReference type="Pharos" id="O75475">
    <property type="development level" value="Tchem"/>
</dbReference>
<dbReference type="PRO" id="PR:O75475"/>
<dbReference type="Proteomes" id="UP000005640">
    <property type="component" value="Chromosome 9"/>
</dbReference>
<dbReference type="RNAct" id="O75475">
    <property type="molecule type" value="protein"/>
</dbReference>
<dbReference type="Bgee" id="ENSG00000164985">
    <property type="expression patterns" value="Expressed in secondary oocyte and 216 other cell types or tissues"/>
</dbReference>
<dbReference type="ExpressionAtlas" id="O75475">
    <property type="expression patterns" value="baseline and differential"/>
</dbReference>
<dbReference type="GO" id="GO:0005829">
    <property type="term" value="C:cytosol"/>
    <property type="evidence" value="ECO:0000304"/>
    <property type="project" value="Reactome"/>
</dbReference>
<dbReference type="GO" id="GO:0000791">
    <property type="term" value="C:euchromatin"/>
    <property type="evidence" value="ECO:0000250"/>
    <property type="project" value="UniProtKB"/>
</dbReference>
<dbReference type="GO" id="GO:0000792">
    <property type="term" value="C:heterochromatin"/>
    <property type="evidence" value="ECO:0000314"/>
    <property type="project" value="UniProtKB"/>
</dbReference>
<dbReference type="GO" id="GO:0034399">
    <property type="term" value="C:nuclear periphery"/>
    <property type="evidence" value="ECO:0000314"/>
    <property type="project" value="UniProtKB"/>
</dbReference>
<dbReference type="GO" id="GO:0005654">
    <property type="term" value="C:nucleoplasm"/>
    <property type="evidence" value="ECO:0000314"/>
    <property type="project" value="HPA"/>
</dbReference>
<dbReference type="GO" id="GO:0005634">
    <property type="term" value="C:nucleus"/>
    <property type="evidence" value="ECO:0000314"/>
    <property type="project" value="UniProtKB"/>
</dbReference>
<dbReference type="GO" id="GO:0003682">
    <property type="term" value="F:chromatin binding"/>
    <property type="evidence" value="ECO:0000314"/>
    <property type="project" value="UniProtKB"/>
</dbReference>
<dbReference type="GO" id="GO:0140297">
    <property type="term" value="F:DNA-binding transcription factor binding"/>
    <property type="evidence" value="ECO:0000314"/>
    <property type="project" value="UniProtKB"/>
</dbReference>
<dbReference type="GO" id="GO:0003723">
    <property type="term" value="F:RNA binding"/>
    <property type="evidence" value="ECO:0007005"/>
    <property type="project" value="UniProtKB"/>
</dbReference>
<dbReference type="GO" id="GO:0097100">
    <property type="term" value="F:supercoiled DNA binding"/>
    <property type="evidence" value="ECO:0000250"/>
    <property type="project" value="UniProtKB"/>
</dbReference>
<dbReference type="GO" id="GO:0003713">
    <property type="term" value="F:transcription coactivator activity"/>
    <property type="evidence" value="ECO:0000314"/>
    <property type="project" value="UniProtKB"/>
</dbReference>
<dbReference type="GO" id="GO:0006338">
    <property type="term" value="P:chromatin remodeling"/>
    <property type="evidence" value="ECO:0000318"/>
    <property type="project" value="GO_Central"/>
</dbReference>
<dbReference type="GO" id="GO:0000395">
    <property type="term" value="P:mRNA 5'-splice site recognition"/>
    <property type="evidence" value="ECO:0000314"/>
    <property type="project" value="UniProtKB"/>
</dbReference>
<dbReference type="GO" id="GO:0045944">
    <property type="term" value="P:positive regulation of transcription by RNA polymerase II"/>
    <property type="evidence" value="ECO:0000314"/>
    <property type="project" value="UniProtKB"/>
</dbReference>
<dbReference type="GO" id="GO:0009408">
    <property type="term" value="P:response to heat"/>
    <property type="evidence" value="ECO:0000250"/>
    <property type="project" value="UniProtKB"/>
</dbReference>
<dbReference type="GO" id="GO:0006979">
    <property type="term" value="P:response to oxidative stress"/>
    <property type="evidence" value="ECO:0000250"/>
    <property type="project" value="UniProtKB"/>
</dbReference>
<dbReference type="CDD" id="cd20151">
    <property type="entry name" value="PWWP_PSIP"/>
    <property type="match status" value="1"/>
</dbReference>
<dbReference type="FunFam" id="2.30.30.140:FF:000017">
    <property type="entry name" value="hepatoma-derived growth factor isoform X1"/>
    <property type="match status" value="1"/>
</dbReference>
<dbReference type="FunFam" id="1.20.930.10:FF:000005">
    <property type="entry name" value="PC4 and SFRS1-interacting protein-like isoform X1"/>
    <property type="match status" value="1"/>
</dbReference>
<dbReference type="Gene3D" id="2.30.30.140">
    <property type="match status" value="1"/>
</dbReference>
<dbReference type="Gene3D" id="1.20.930.10">
    <property type="entry name" value="Conserved domain common to transcription factors TFIIS, elongin A, CRSP70"/>
    <property type="match status" value="1"/>
</dbReference>
<dbReference type="IDEAL" id="IID00408"/>
<dbReference type="InterPro" id="IPR036218">
    <property type="entry name" value="HIVI-bd_sf"/>
</dbReference>
<dbReference type="InterPro" id="IPR021567">
    <property type="entry name" value="LEDGF_IBD"/>
</dbReference>
<dbReference type="InterPro" id="IPR000313">
    <property type="entry name" value="PWWP_dom"/>
</dbReference>
<dbReference type="InterPro" id="IPR035441">
    <property type="entry name" value="TFIIS/LEDGF_dom_sf"/>
</dbReference>
<dbReference type="PANTHER" id="PTHR12550">
    <property type="entry name" value="HEPATOMA-DERIVED GROWTH FACTOR-RELATED"/>
    <property type="match status" value="1"/>
</dbReference>
<dbReference type="PANTHER" id="PTHR12550:SF42">
    <property type="entry name" value="PC4 AND SFRS1-INTERACTING PROTEIN"/>
    <property type="match status" value="1"/>
</dbReference>
<dbReference type="Pfam" id="PF11467">
    <property type="entry name" value="LEDGF"/>
    <property type="match status" value="1"/>
</dbReference>
<dbReference type="Pfam" id="PF00855">
    <property type="entry name" value="PWWP"/>
    <property type="match status" value="1"/>
</dbReference>
<dbReference type="PRINTS" id="PR01503">
    <property type="entry name" value="TREACLE"/>
</dbReference>
<dbReference type="SMART" id="SM00293">
    <property type="entry name" value="PWWP"/>
    <property type="match status" value="1"/>
</dbReference>
<dbReference type="SUPFAM" id="SSF140576">
    <property type="entry name" value="HIV integrase-binding domain"/>
    <property type="match status" value="1"/>
</dbReference>
<dbReference type="SUPFAM" id="SSF63748">
    <property type="entry name" value="Tudor/PWWP/MBT"/>
    <property type="match status" value="1"/>
</dbReference>
<dbReference type="PROSITE" id="PS50812">
    <property type="entry name" value="PWWP"/>
    <property type="match status" value="1"/>
</dbReference>
<protein>
    <recommendedName>
        <fullName>PC4 and SFRS1-interacting protein</fullName>
    </recommendedName>
    <alternativeName>
        <fullName>CLL-associated antigen KW-7</fullName>
    </alternativeName>
    <alternativeName>
        <fullName>Dense fine speckles 70 kDa protein</fullName>
        <shortName>DFS 70</shortName>
    </alternativeName>
    <alternativeName>
        <fullName>Lens epithelium-derived growth factor</fullName>
    </alternativeName>
    <alternativeName>
        <fullName>Transcriptional coactivator p75/p52</fullName>
    </alternativeName>
</protein>
<accession>O75475</accession>
<accession>D3DRI9</accession>
<accession>O00256</accession>
<accession>O95368</accession>
<accession>Q6P391</accession>
<accession>Q86YB9</accession>
<accession>Q9NZI3</accession>
<accession>Q9UER6</accession>
<comment type="function">
    <text evidence="8">Transcriptional coactivator involved in neuroepithelial stem cell differentiation and neurogenesis. Involved in particular in lens epithelial cell gene regulation and stress responses. May play an important role in lens epithelial to fiber cell terminal differentiation. May play a protective role during stress-induced apoptosis. Isoform 2 is a more general and stronger transcriptional coactivator. Isoform 2 may also act as an adapter to coordinate pre-mRNA splicing. Cellular cofactor for lentiviral integration.</text>
</comment>
<comment type="subunit">
    <text evidence="12 13 14 15 16 17 18 19 20">Monomer (PubMed:15895093). Interacts with IFRD1/PC4 (PubMed:9822615). Isoform 2 interacts with SFRS1 (PubMed:9885563). Isoform 1 interacts (via IBD domain) with POGZ (via IBM motif) and CDCA7L (via IBM motifs) (PubMed:19244240, PubMed:25082813, PubMed:29997176). Interacts (via IBD domain) with KMT2A (via IBM motifs) with a moderate affinity whereas interacts with the KMT2A-MEN1 complex with a greater affinity; MEN1 enhances interaction of KMT2A with PSIP1 (PubMed:22327296, PubMed:25082813, PubMed:25305204, PubMed:29997176). Interacts with fusion protein KMT2A-MLLT3 (PubMed:25305204). Interacts (via IBD domain) with IWS1 (via IBM motif), MED1 (via IBM motif) and DBF4 (via IBM motifs) (PubMed:29997176).</text>
</comment>
<comment type="subunit">
    <molecule>Isoform 1</molecule>
    <text evidence="7 10 11 12 14 16 17">(Microbial infection) Interacts (via IBD domain) with human HIV-1 integrase protein (HIV-1 IN), determining its nuclear localization, its tight association with chromatin and its protection from the proteasome.</text>
</comment>
<comment type="subunit">
    <molecule>Isoform 1</molecule>
    <text evidence="10">(Microbial infection) Interacts with HIV-2 IN.</text>
</comment>
<comment type="interaction">
    <interactant intactId="EBI-1801773">
        <id>O75475</id>
    </interactant>
    <interactant intactId="EBI-745715">
        <id>Q99708</id>
        <label>RBBP8</label>
    </interactant>
    <organismsDiffer>false</organismsDiffer>
    <experiments>4</experiments>
</comment>
<comment type="interaction">
    <interactant intactId="EBI-1801773">
        <id>O75475</id>
    </interactant>
    <interactant intactId="EBI-80140">
        <id>P63165</id>
        <label>SUMO1</label>
    </interactant>
    <organismsDiffer>false</organismsDiffer>
    <experiments>4</experiments>
</comment>
<comment type="interaction">
    <interactant intactId="EBI-1801773">
        <id>O75475</id>
    </interactant>
    <interactant intactId="EBI-3989067">
        <id>P04585</id>
        <label>gag-pol</label>
    </interactant>
    <organismsDiffer>true</organismsDiffer>
    <experiments>21</experiments>
</comment>
<comment type="interaction">
    <interactant intactId="EBI-5279836">
        <id>O75475-1</id>
    </interactant>
    <interactant intactId="EBI-9872653">
        <id>PRO_0000042447</id>
        <label>gag-pol</label>
        <dbReference type="UniProtKB" id="P04585"/>
    </interactant>
    <organismsDiffer>true</organismsDiffer>
    <experiments>2</experiments>
</comment>
<comment type="interaction">
    <interactant intactId="EBI-5279836">
        <id>O75475-1</id>
    </interactant>
    <interactant intactId="EBI-10131955">
        <id>PRO_0000042402</id>
        <label>gag-pol</label>
        <dbReference type="UniProtKB" id="P12497"/>
    </interactant>
    <organismsDiffer>true</organismsDiffer>
    <experiments>3</experiments>
</comment>
<comment type="subcellular location">
    <subcellularLocation>
        <location evidence="8 20">Nucleus</location>
    </subcellularLocation>
    <text>Remains chromatin-associated throughout the cell cycle.</text>
</comment>
<comment type="alternative products">
    <event type="alternative splicing"/>
    <isoform>
        <id>O75475-1</id>
        <name>1</name>
        <name>p75</name>
        <name>PSIP1</name>
        <sequence type="displayed"/>
    </isoform>
    <isoform>
        <id>O75475-2</id>
        <name>2</name>
        <name>p52</name>
        <name>PSIP2</name>
        <sequence type="described" ref="VSP_014297 VSP_014298"/>
    </isoform>
    <isoform>
        <id>O75475-3</id>
        <name>3</name>
        <sequence type="described" ref="VSP_044435"/>
    </isoform>
</comment>
<comment type="tissue specificity">
    <text evidence="8 19">Widely expressed. Expressed at high level in the thymus. Expressed in fetal and adult brain. Expressed in neurons, but not astrocytes. Markedly elevated in fetal as compared to adult brain. In the adult brain, expressed in the subventricular zone (SVZ), in hippocampus, and undetectable elsewhere. In the fetal brain, expressed in the germinal neuroepithelium and cortical plate regions.</text>
</comment>
<comment type="PTM">
    <text evidence="3">Citrullinated by PADI4.</text>
</comment>
<comment type="disease">
    <text evidence="9">A chromosomal aberration involving PSIP1 is associated with pediatric acute myeloid leukemia (AML) with intermediate characteristics between M2-M3 French-American-British (FAB) subtypes. Translocation t(9;11)(p22;p15) with NUP98. The chimeric transcript is an in-frame fusion of NUP98 exon 8 to PSIP1 exon 4.</text>
</comment>
<comment type="miscellaneous">
    <molecule>Isoform 1</molecule>
    <text>Less active than isoform 2 as transcriptional coactivator, but more abundant in cells.</text>
</comment>
<comment type="similarity">
    <text evidence="23">Belongs to the HDGF family.</text>
</comment>
<comment type="online information" name="Atlas of Genetics and Cytogenetics in Oncology and Haematology">
    <link uri="https://atlasgeneticsoncology.org/gene/405/PSIP1"/>
</comment>
<organism>
    <name type="scientific">Homo sapiens</name>
    <name type="common">Human</name>
    <dbReference type="NCBI Taxonomy" id="9606"/>
    <lineage>
        <taxon>Eukaryota</taxon>
        <taxon>Metazoa</taxon>
        <taxon>Chordata</taxon>
        <taxon>Craniata</taxon>
        <taxon>Vertebrata</taxon>
        <taxon>Euteleostomi</taxon>
        <taxon>Mammalia</taxon>
        <taxon>Eutheria</taxon>
        <taxon>Euarchontoglires</taxon>
        <taxon>Primates</taxon>
        <taxon>Haplorrhini</taxon>
        <taxon>Catarrhini</taxon>
        <taxon>Hominidae</taxon>
        <taxon>Homo</taxon>
    </lineage>
</organism>
<keyword id="KW-0002">3D-structure</keyword>
<keyword id="KW-0025">Alternative splicing</keyword>
<keyword id="KW-0160">Chromosomal rearrangement</keyword>
<keyword id="KW-0164">Citrullination</keyword>
<keyword id="KW-0175">Coiled coil</keyword>
<keyword id="KW-0903">Direct protein sequencing</keyword>
<keyword id="KW-0238">DNA-binding</keyword>
<keyword id="KW-0945">Host-virus interaction</keyword>
<keyword id="KW-1017">Isopeptide bond</keyword>
<keyword id="KW-0539">Nucleus</keyword>
<keyword id="KW-0597">Phosphoprotein</keyword>
<keyword id="KW-1267">Proteomics identification</keyword>
<keyword id="KW-1185">Reference proteome</keyword>
<keyword id="KW-0804">Transcription</keyword>
<keyword id="KW-0805">Transcription regulation</keyword>
<keyword id="KW-0832">Ubl conjugation</keyword>
<sequence>MTRDFKPGDLIFAKMKGYPHWPARVDEVPDGAVKPPTNKLPIFFFGTHETAFLGPKDIFPYSENKEKYGKPNKRKGFNEGLWEIDNNPKVKFSSQQAATKQSNASSDVEVEEKETSVSKEDTDHEEKASNEDVTKAVDITTPKAARRGRKRKAEKQVETEEAGVVTTATASVNLKVSPKRGRPAATEVKIPKPRGRPKMVKQPCPSESDIITEEDKSKKKGQEEKQPKKQPKKDEEGQKEEDKPRKEPDKKEGKKEVESKRKNLAKTGVTSTSDSEEEGDDQEGEKKRKGGRNFQTAHRRNMLKGQHEKEAADRKRKQEEQMETEQQNKDEGKKPEVKKVEKKRETSMDSRLQRIHAEIKNSLKIDNLDVNRCIEALDELASLQVTMQQAQKHTEMITTLKKIRRFKVSQVIMEKSTMLYNKFKNMFLVGEGDSVITQVLNKSLAEQRQHEEANKTKDQGKKGPNKKLEKEQTGSKTLNGGSDAQDGNQPQHNGESNEDSKDNHEASTKKKPSSEERETEISLKDSTLDN</sequence>
<name>PSIP1_HUMAN</name>
<evidence type="ECO:0000250" key="1"/>
<evidence type="ECO:0000250" key="2">
    <source>
        <dbReference type="UniProtKB" id="Q812D1"/>
    </source>
</evidence>
<evidence type="ECO:0000250" key="3">
    <source>
        <dbReference type="UniProtKB" id="Q99JF8"/>
    </source>
</evidence>
<evidence type="ECO:0000255" key="4"/>
<evidence type="ECO:0000255" key="5">
    <source>
        <dbReference type="PROSITE-ProRule" id="PRU00162"/>
    </source>
</evidence>
<evidence type="ECO:0000256" key="6">
    <source>
        <dbReference type="SAM" id="MobiDB-lite"/>
    </source>
</evidence>
<evidence type="ECO:0000269" key="7">
    <source>
    </source>
</evidence>
<evidence type="ECO:0000269" key="8">
    <source>
    </source>
</evidence>
<evidence type="ECO:0000269" key="9">
    <source>
    </source>
</evidence>
<evidence type="ECO:0000269" key="10">
    <source>
    </source>
</evidence>
<evidence type="ECO:0000269" key="11">
    <source>
    </source>
</evidence>
<evidence type="ECO:0000269" key="12">
    <source>
    </source>
</evidence>
<evidence type="ECO:0000269" key="13">
    <source>
    </source>
</evidence>
<evidence type="ECO:0000269" key="14">
    <source>
    </source>
</evidence>
<evidence type="ECO:0000269" key="15">
    <source>
    </source>
</evidence>
<evidence type="ECO:0000269" key="16">
    <source>
    </source>
</evidence>
<evidence type="ECO:0000269" key="17">
    <source>
    </source>
</evidence>
<evidence type="ECO:0000269" key="18">
    <source>
    </source>
</evidence>
<evidence type="ECO:0000269" key="19">
    <source>
    </source>
</evidence>
<evidence type="ECO:0000269" key="20">
    <source>
    </source>
</evidence>
<evidence type="ECO:0000303" key="21">
    <source>
    </source>
</evidence>
<evidence type="ECO:0000303" key="22">
    <source>
    </source>
</evidence>
<evidence type="ECO:0000305" key="23"/>
<evidence type="ECO:0007744" key="24">
    <source>
        <dbReference type="PDB" id="2MSR"/>
    </source>
</evidence>
<evidence type="ECO:0007744" key="25">
    <source>
        <dbReference type="PDB" id="2MTN"/>
    </source>
</evidence>
<evidence type="ECO:0007744" key="26">
    <source>
        <dbReference type="PDB" id="3U88"/>
    </source>
</evidence>
<evidence type="ECO:0007744" key="27">
    <source>
        <dbReference type="PDB" id="5YI9"/>
    </source>
</evidence>
<evidence type="ECO:0007744" key="28">
    <source>
        <dbReference type="PDB" id="6EMO"/>
    </source>
</evidence>
<evidence type="ECO:0007744" key="29">
    <source>
        <dbReference type="PDB" id="6EMP"/>
    </source>
</evidence>
<evidence type="ECO:0007744" key="30">
    <source>
        <dbReference type="PDB" id="6EMQ"/>
    </source>
</evidence>
<evidence type="ECO:0007744" key="31">
    <source>
        <dbReference type="PDB" id="6EMR"/>
    </source>
</evidence>
<evidence type="ECO:0007744" key="32">
    <source>
    </source>
</evidence>
<evidence type="ECO:0007744" key="33">
    <source>
    </source>
</evidence>
<evidence type="ECO:0007744" key="34">
    <source>
    </source>
</evidence>
<evidence type="ECO:0007744" key="35">
    <source>
    </source>
</evidence>
<evidence type="ECO:0007744" key="36">
    <source>
    </source>
</evidence>
<evidence type="ECO:0007744" key="37">
    <source>
    </source>
</evidence>
<evidence type="ECO:0007744" key="38">
    <source>
    </source>
</evidence>
<evidence type="ECO:0007744" key="39">
    <source>
    </source>
</evidence>
<evidence type="ECO:0007744" key="40">
    <source>
    </source>
</evidence>
<evidence type="ECO:0007829" key="41">
    <source>
        <dbReference type="PDB" id="2M16"/>
    </source>
</evidence>
<evidence type="ECO:0007829" key="42">
    <source>
        <dbReference type="PDB" id="3HPH"/>
    </source>
</evidence>
<evidence type="ECO:0007829" key="43">
    <source>
        <dbReference type="PDB" id="4FU6"/>
    </source>
</evidence>
<evidence type="ECO:0007829" key="44">
    <source>
        <dbReference type="PDB" id="5YI9"/>
    </source>
</evidence>
<evidence type="ECO:0007829" key="45">
    <source>
        <dbReference type="PDB" id="6S01"/>
    </source>
</evidence>
<evidence type="ECO:0007829" key="46">
    <source>
        <dbReference type="PDB" id="6TRJ"/>
    </source>
</evidence>
<evidence type="ECO:0007829" key="47">
    <source>
        <dbReference type="PDB" id="6TVM"/>
    </source>
</evidence>
<evidence type="ECO:0007829" key="48">
    <source>
        <dbReference type="PDB" id="8PEO"/>
    </source>
</evidence>
<reference key="1">
    <citation type="journal article" date="1998" name="EMBO J.">
        <title>Isolation of cDNAs encoding novel transcription coactivators p52 and p75 reveals an alternate regulatory mechanism of transcriptional activation.</title>
        <authorList>
            <person name="Ge H."/>
            <person name="Si Y."/>
            <person name="Roeder R.G."/>
        </authorList>
    </citation>
    <scope>NUCLEOTIDE SEQUENCE [MRNA] (ISOFORMS 1 AND 2)</scope>
    <scope>PROTEIN SEQUENCE OF 4-39 AND 76-89</scope>
    <scope>TISSUE SPECIFICITY</scope>
    <scope>INTERACTION WITH IFRD1</scope>
    <source>
        <tissue>Cervix carcinoma</tissue>
    </source>
</reference>
<reference key="2">
    <citation type="journal article" date="2000" name="Biochem. Biophys. Res. Commun.">
        <title>Lens epithelium-derived growth factor: effects on growth and survival of lens epithelial cells, keratinocytes, and fibroblasts.</title>
        <authorList>
            <person name="Singh D.P."/>
            <person name="Ohguro N."/>
            <person name="Kikuchi T."/>
            <person name="Sueno T."/>
            <person name="Reddy V.N."/>
            <person name="Yuge K."/>
            <person name="Chylack L.T. Jr."/>
            <person name="Shinohara T."/>
        </authorList>
    </citation>
    <scope>NUCLEOTIDE SEQUENCE [MRNA] (ISOFORM 1)</scope>
    <source>
        <tissue>Lens</tissue>
    </source>
</reference>
<reference key="3">
    <citation type="journal article" date="2000" name="Gene">
        <title>Lens epithelium-derived growth factor (LEDGF/p75) and p52 are derived from a single gene by alternative splicing.</title>
        <authorList>
            <person name="Singh D.P."/>
            <person name="Kimura A."/>
            <person name="Chylack L.T. Jr."/>
            <person name="Shinohara T."/>
        </authorList>
    </citation>
    <scope>NUCLEOTIDE SEQUENCE [GENOMIC DNA] (ISOFORMS 1 AND 2)</scope>
</reference>
<reference key="4">
    <citation type="journal article" date="2002" name="Blood">
        <title>Identification of tumor-associated antigens in chronic lymphocytic leukemia by SEREX.</title>
        <authorList>
            <person name="Krackhardt A.M."/>
            <person name="Witzens M."/>
            <person name="Harig S."/>
            <person name="Hodi F.S."/>
            <person name="Zauls A.J."/>
            <person name="Chessia M."/>
            <person name="Barrett P."/>
            <person name="Gribben J.G."/>
        </authorList>
    </citation>
    <scope>NUCLEOTIDE SEQUENCE [MRNA] (ISOFORM 1)</scope>
    <source>
        <tissue>Leukemia</tissue>
    </source>
</reference>
<reference key="5">
    <citation type="journal article" date="2004" name="Nature">
        <title>DNA sequence and analysis of human chromosome 9.</title>
        <authorList>
            <person name="Humphray S.J."/>
            <person name="Oliver K."/>
            <person name="Hunt A.R."/>
            <person name="Plumb R.W."/>
            <person name="Loveland J.E."/>
            <person name="Howe K.L."/>
            <person name="Andrews T.D."/>
            <person name="Searle S."/>
            <person name="Hunt S.E."/>
            <person name="Scott C.E."/>
            <person name="Jones M.C."/>
            <person name="Ainscough R."/>
            <person name="Almeida J.P."/>
            <person name="Ambrose K.D."/>
            <person name="Ashwell R.I.S."/>
            <person name="Babbage A.K."/>
            <person name="Babbage S."/>
            <person name="Bagguley C.L."/>
            <person name="Bailey J."/>
            <person name="Banerjee R."/>
            <person name="Barker D.J."/>
            <person name="Barlow K.F."/>
            <person name="Bates K."/>
            <person name="Beasley H."/>
            <person name="Beasley O."/>
            <person name="Bird C.P."/>
            <person name="Bray-Allen S."/>
            <person name="Brown A.J."/>
            <person name="Brown J.Y."/>
            <person name="Burford D."/>
            <person name="Burrill W."/>
            <person name="Burton J."/>
            <person name="Carder C."/>
            <person name="Carter N.P."/>
            <person name="Chapman J.C."/>
            <person name="Chen Y."/>
            <person name="Clarke G."/>
            <person name="Clark S.Y."/>
            <person name="Clee C.M."/>
            <person name="Clegg S."/>
            <person name="Collier R.E."/>
            <person name="Corby N."/>
            <person name="Crosier M."/>
            <person name="Cummings A.T."/>
            <person name="Davies J."/>
            <person name="Dhami P."/>
            <person name="Dunn M."/>
            <person name="Dutta I."/>
            <person name="Dyer L.W."/>
            <person name="Earthrowl M.E."/>
            <person name="Faulkner L."/>
            <person name="Fleming C.J."/>
            <person name="Frankish A."/>
            <person name="Frankland J.A."/>
            <person name="French L."/>
            <person name="Fricker D.G."/>
            <person name="Garner P."/>
            <person name="Garnett J."/>
            <person name="Ghori J."/>
            <person name="Gilbert J.G.R."/>
            <person name="Glison C."/>
            <person name="Grafham D.V."/>
            <person name="Gribble S."/>
            <person name="Griffiths C."/>
            <person name="Griffiths-Jones S."/>
            <person name="Grocock R."/>
            <person name="Guy J."/>
            <person name="Hall R.E."/>
            <person name="Hammond S."/>
            <person name="Harley J.L."/>
            <person name="Harrison E.S.I."/>
            <person name="Hart E.A."/>
            <person name="Heath P.D."/>
            <person name="Henderson C.D."/>
            <person name="Hopkins B.L."/>
            <person name="Howard P.J."/>
            <person name="Howden P.J."/>
            <person name="Huckle E."/>
            <person name="Johnson C."/>
            <person name="Johnson D."/>
            <person name="Joy A.A."/>
            <person name="Kay M."/>
            <person name="Keenan S."/>
            <person name="Kershaw J.K."/>
            <person name="Kimberley A.M."/>
            <person name="King A."/>
            <person name="Knights A."/>
            <person name="Laird G.K."/>
            <person name="Langford C."/>
            <person name="Lawlor S."/>
            <person name="Leongamornlert D.A."/>
            <person name="Leversha M."/>
            <person name="Lloyd C."/>
            <person name="Lloyd D.M."/>
            <person name="Lovell J."/>
            <person name="Martin S."/>
            <person name="Mashreghi-Mohammadi M."/>
            <person name="Matthews L."/>
            <person name="McLaren S."/>
            <person name="McLay K.E."/>
            <person name="McMurray A."/>
            <person name="Milne S."/>
            <person name="Nickerson T."/>
            <person name="Nisbett J."/>
            <person name="Nordsiek G."/>
            <person name="Pearce A.V."/>
            <person name="Peck A.I."/>
            <person name="Porter K.M."/>
            <person name="Pandian R."/>
            <person name="Pelan S."/>
            <person name="Phillimore B."/>
            <person name="Povey S."/>
            <person name="Ramsey Y."/>
            <person name="Rand V."/>
            <person name="Scharfe M."/>
            <person name="Sehra H.K."/>
            <person name="Shownkeen R."/>
            <person name="Sims S.K."/>
            <person name="Skuce C.D."/>
            <person name="Smith M."/>
            <person name="Steward C.A."/>
            <person name="Swarbreck D."/>
            <person name="Sycamore N."/>
            <person name="Tester J."/>
            <person name="Thorpe A."/>
            <person name="Tracey A."/>
            <person name="Tromans A."/>
            <person name="Thomas D.W."/>
            <person name="Wall M."/>
            <person name="Wallis J.M."/>
            <person name="West A.P."/>
            <person name="Whitehead S.L."/>
            <person name="Willey D.L."/>
            <person name="Williams S.A."/>
            <person name="Wilming L."/>
            <person name="Wray P.W."/>
            <person name="Young L."/>
            <person name="Ashurst J.L."/>
            <person name="Coulson A."/>
            <person name="Blocker H."/>
            <person name="Durbin R.M."/>
            <person name="Sulston J.E."/>
            <person name="Hubbard T."/>
            <person name="Jackson M.J."/>
            <person name="Bentley D.R."/>
            <person name="Beck S."/>
            <person name="Rogers J."/>
            <person name="Dunham I."/>
        </authorList>
    </citation>
    <scope>NUCLEOTIDE SEQUENCE [LARGE SCALE GENOMIC DNA]</scope>
</reference>
<reference key="6">
    <citation type="submission" date="2005-09" db="EMBL/GenBank/DDBJ databases">
        <authorList>
            <person name="Mural R.J."/>
            <person name="Istrail S."/>
            <person name="Sutton G.G."/>
            <person name="Florea L."/>
            <person name="Halpern A.L."/>
            <person name="Mobarry C.M."/>
            <person name="Lippert R."/>
            <person name="Walenz B."/>
            <person name="Shatkay H."/>
            <person name="Dew I."/>
            <person name="Miller J.R."/>
            <person name="Flanigan M.J."/>
            <person name="Edwards N.J."/>
            <person name="Bolanos R."/>
            <person name="Fasulo D."/>
            <person name="Halldorsson B.V."/>
            <person name="Hannenhalli S."/>
            <person name="Turner R."/>
            <person name="Yooseph S."/>
            <person name="Lu F."/>
            <person name="Nusskern D.R."/>
            <person name="Shue B.C."/>
            <person name="Zheng X.H."/>
            <person name="Zhong F."/>
            <person name="Delcher A.L."/>
            <person name="Huson D.H."/>
            <person name="Kravitz S.A."/>
            <person name="Mouchard L."/>
            <person name="Reinert K."/>
            <person name="Remington K.A."/>
            <person name="Clark A.G."/>
            <person name="Waterman M.S."/>
            <person name="Eichler E.E."/>
            <person name="Adams M.D."/>
            <person name="Hunkapiller M.W."/>
            <person name="Myers E.W."/>
            <person name="Venter J.C."/>
        </authorList>
    </citation>
    <scope>NUCLEOTIDE SEQUENCE [LARGE SCALE GENOMIC DNA]</scope>
</reference>
<reference key="7">
    <citation type="journal article" date="2004" name="Genome Res.">
        <title>The status, quality, and expansion of the NIH full-length cDNA project: the Mammalian Gene Collection (MGC).</title>
        <authorList>
            <consortium name="The MGC Project Team"/>
        </authorList>
    </citation>
    <scope>NUCLEOTIDE SEQUENCE [LARGE SCALE MRNA] (ISOFORMS 2 AND 3)</scope>
    <source>
        <tissue>Testis</tissue>
        <tissue>Uterus</tissue>
    </source>
</reference>
<reference key="8">
    <citation type="journal article" date="2000" name="J. Allergy Clin. Immunol.">
        <title>Autoantibodies to DFS 70 kd/transcription coactivator p75 in atopic dermatitis and other conditions.</title>
        <authorList>
            <person name="Ochs R.L."/>
            <person name="Muro Y."/>
            <person name="Si Y."/>
            <person name="Ge H."/>
            <person name="Chan E.K.L."/>
            <person name="Tan E.M."/>
        </authorList>
    </citation>
    <scope>NUCLEOTIDE SEQUENCE [MRNA] OF 180-530 (ISOFORM 1)</scope>
</reference>
<reference key="9">
    <citation type="journal article" date="2004" name="Exp. Eye Res.">
        <title>Lens epithelium-derived growth factor (LEDGF/p75) expression in fetal and adult human brain.</title>
        <authorList>
            <person name="Chylack L.T. Jr."/>
            <person name="Fu L."/>
            <person name="Mancini R."/>
            <person name="Martin-Rehrmann M.D."/>
            <person name="Saunders A.J."/>
            <person name="Konopka G."/>
            <person name="Tian D."/>
            <person name="Hedley-Whyte E.T."/>
            <person name="Folkerth R.D."/>
            <person name="Goldstein L.E."/>
        </authorList>
    </citation>
    <scope>FUNCTION</scope>
    <scope>TISSUE SPECIFICITY</scope>
    <scope>SUBCELLULAR LOCATION</scope>
</reference>
<reference key="10">
    <citation type="journal article" date="2004" name="J. Biol. Chem.">
        <title>Lens epithelium-derived growth factor/p75 prevents proteasomal degradation of HIV-1 integrase.</title>
        <authorList>
            <person name="Llano M."/>
            <person name="Delgado S."/>
            <person name="Vanegas M."/>
            <person name="Poeschla E.M."/>
        </authorList>
    </citation>
    <scope>INTERACTION WITH HUMAN HIV-1 INTEGRASE (ISOFORM 1) (MICROBIAL INFECTION)</scope>
</reference>
<reference key="11">
    <citation type="journal article" date="2005" name="J. Biol. Chem.">
        <title>The interaction of LEDGF/p75 with integrase is lentiviral-specific and promotes DNA binding.</title>
        <authorList>
            <person name="Busschots K."/>
            <person name="Vercammen J."/>
            <person name="Emiliani S."/>
            <person name="Benarous R."/>
            <person name="Engelborghs Y."/>
            <person name="Christ F."/>
            <person name="Debyser Z."/>
        </authorList>
    </citation>
    <scope>INTERACTION WITH HUMAN HIV-1 AND HIV-2 INTEGRASE (ISOFORM 1) (MICROBIAL INFECTION)</scope>
</reference>
<reference key="12">
    <citation type="journal article" date="2005" name="J. Cell Sci.">
        <title>Identification of the LEDGF/p75 HIV-1 integrase-interaction domain and NLS reveals NLS-independent chromatin tethering.</title>
        <authorList>
            <person name="Vanegas M."/>
            <person name="Llano M."/>
            <person name="Delgado S."/>
            <person name="Thompson D."/>
            <person name="Peretz M."/>
            <person name="Poeschla E.M."/>
        </authorList>
    </citation>
    <scope>INTERACTION WITH HUMAN HIV-1 INTEGRASE (ISOFORM 1) (MICROBIAL INFECTION)</scope>
    <scope>NUCLEAR LOCALIZATION SIGNAL</scope>
</reference>
<reference key="13">
    <citation type="journal article" date="1998" name="Mol. Cell">
        <title>A novel transcriptional coactivator, p52, functionally interacts with the essential splicing factor ASF/SF2.</title>
        <authorList>
            <person name="Ge H."/>
            <person name="Si Y."/>
            <person name="Wolffe A.P."/>
        </authorList>
    </citation>
    <scope>INTERACTION WITH SFRS1</scope>
    <scope>SUBCELLULAR LOCATION</scope>
</reference>
<reference key="14">
    <citation type="journal article" date="2005" name="Leuk. Res.">
        <title>t(9;11)(p22;p15) with NUP98-LEDGF fusion gene in pediatric acute myeloid leukemia.</title>
        <authorList>
            <person name="Morerio C."/>
            <person name="Acquila M."/>
            <person name="Rosanda C."/>
            <person name="Rapella A."/>
            <person name="Tassano E."/>
            <person name="Micalizzi C."/>
            <person name="Panarello C."/>
        </authorList>
    </citation>
    <scope>CHROMOSOMAL TRANSLOCATION WITH NUP98</scope>
</reference>
<reference key="15">
    <citation type="journal article" date="2006" name="Cell">
        <title>Global, in vivo, and site-specific phosphorylation dynamics in signaling networks.</title>
        <authorList>
            <person name="Olsen J.V."/>
            <person name="Blagoev B."/>
            <person name="Gnad F."/>
            <person name="Macek B."/>
            <person name="Kumar C."/>
            <person name="Mortensen P."/>
            <person name="Mann M."/>
        </authorList>
    </citation>
    <scope>PHOSPHORYLATION [LARGE SCALE ANALYSIS] AT THR-122</scope>
    <scope>IDENTIFICATION BY MASS SPECTROMETRY [LARGE SCALE ANALYSIS]</scope>
    <source>
        <tissue>Cervix carcinoma</tissue>
    </source>
</reference>
<reference key="16">
    <citation type="journal article" date="2007" name="Science">
        <title>ATM and ATR substrate analysis reveals extensive protein networks responsive to DNA damage.</title>
        <authorList>
            <person name="Matsuoka S."/>
            <person name="Ballif B.A."/>
            <person name="Smogorzewska A."/>
            <person name="McDonald E.R. III"/>
            <person name="Hurov K.E."/>
            <person name="Luo J."/>
            <person name="Bakalarski C.E."/>
            <person name="Zhao Z."/>
            <person name="Solimini N."/>
            <person name="Lerenthal Y."/>
            <person name="Shiloh Y."/>
            <person name="Gygi S.P."/>
            <person name="Elledge S.J."/>
        </authorList>
    </citation>
    <scope>PHOSPHORYLATION [LARGE SCALE ANALYSIS] AT THR-437</scope>
    <scope>IDENTIFICATION BY MASS SPECTROMETRY [LARGE SCALE ANALYSIS]</scope>
    <source>
        <tissue>Embryonic kidney</tissue>
    </source>
</reference>
<reference key="17">
    <citation type="journal article" date="2008" name="J. Proteome Res.">
        <title>Phosphorylation analysis of primary human T lymphocytes using sequential IMAC and titanium oxide enrichment.</title>
        <authorList>
            <person name="Carrascal M."/>
            <person name="Ovelleiro D."/>
            <person name="Casas V."/>
            <person name="Gay M."/>
            <person name="Abian J."/>
        </authorList>
    </citation>
    <scope>IDENTIFICATION BY MASS SPECTROMETRY [LARGE SCALE ANALYSIS]</scope>
    <source>
        <tissue>T-cell</tissue>
    </source>
</reference>
<reference key="18">
    <citation type="journal article" date="2008" name="Proc. Natl. Acad. Sci. U.S.A.">
        <title>A quantitative atlas of mitotic phosphorylation.</title>
        <authorList>
            <person name="Dephoure N."/>
            <person name="Zhou C."/>
            <person name="Villen J."/>
            <person name="Beausoleil S.A."/>
            <person name="Bakalarski C.E."/>
            <person name="Elledge S.J."/>
            <person name="Gygi S.P."/>
        </authorList>
    </citation>
    <scope>PHOSPHORYLATION [LARGE SCALE ANALYSIS] AT SER-106; THR-141; SER-273; SER-275; SER-434; SER-443; SER-522 AND THR-527</scope>
    <scope>IDENTIFICATION BY MASS SPECTROMETRY [LARGE SCALE ANALYSIS]</scope>
    <source>
        <tissue>Cervix carcinoma</tissue>
    </source>
</reference>
<reference key="19">
    <citation type="journal article" date="2008" name="Proteomics">
        <title>Large-scale phosphoproteome analysis of human liver tissue by enrichment and fractionation of phosphopeptides with strong anion exchange chromatography.</title>
        <authorList>
            <person name="Han G."/>
            <person name="Ye M."/>
            <person name="Zhou H."/>
            <person name="Jiang X."/>
            <person name="Feng S."/>
            <person name="Jiang X."/>
            <person name="Tian R."/>
            <person name="Wan D."/>
            <person name="Zou H."/>
            <person name="Gu J."/>
        </authorList>
    </citation>
    <scope>IDENTIFICATION BY MASS SPECTROMETRY [LARGE SCALE ANALYSIS]</scope>
    <source>
        <tissue>Liver</tissue>
    </source>
</reference>
<reference key="20">
    <citation type="journal article" date="2009" name="Anal. Chem.">
        <title>Lys-N and trypsin cover complementary parts of the phosphoproteome in a refined SCX-based approach.</title>
        <authorList>
            <person name="Gauci S."/>
            <person name="Helbig A.O."/>
            <person name="Slijper M."/>
            <person name="Krijgsveld J."/>
            <person name="Heck A.J."/>
            <person name="Mohammed S."/>
        </authorList>
    </citation>
    <scope>IDENTIFICATION BY MASS SPECTROMETRY [LARGE SCALE ANALYSIS]</scope>
</reference>
<reference key="21">
    <citation type="journal article" date="2009" name="J. Biol. Chem.">
        <title>Lens epithelium-derived growth factor/p75 interacts with the transposase-derived DDE domain of PogZ.</title>
        <authorList>
            <person name="Bartholomeeusen K."/>
            <person name="Christ F."/>
            <person name="Hendrix J."/>
            <person name="Rain J.C."/>
            <person name="Emiliani S."/>
            <person name="Benarous R."/>
            <person name="Debyser Z."/>
            <person name="Gijsbers R."/>
            <person name="De Rijck J."/>
        </authorList>
    </citation>
    <scope>INTERACTION WITH POGZ; HIV-1 INTEGRASE (MICROBIAL INFECTION) AND CDCA7L</scope>
    <scope>MUTAGENESIS OF LYS-360; ILE-365; ASP-366; VAL-370; PHE-406 AND VAL-408</scope>
</reference>
<reference key="22">
    <citation type="journal article" date="2009" name="Sci. Signal.">
        <title>Quantitative phosphoproteomic analysis of T cell receptor signaling reveals system-wide modulation of protein-protein interactions.</title>
        <authorList>
            <person name="Mayya V."/>
            <person name="Lundgren D.H."/>
            <person name="Hwang S.-I."/>
            <person name="Rezaul K."/>
            <person name="Wu L."/>
            <person name="Eng J.K."/>
            <person name="Rodionov V."/>
            <person name="Han D.K."/>
        </authorList>
    </citation>
    <scope>PHOSPHORYLATION [LARGE SCALE ANALYSIS] AT THR-141; THR-167; SER-177; SER-273 AND SER-275</scope>
    <scope>IDENTIFICATION BY MASS SPECTROMETRY [LARGE SCALE ANALYSIS]</scope>
    <source>
        <tissue>Leukemic T-cell</tissue>
    </source>
</reference>
<reference key="23">
    <citation type="journal article" date="2010" name="Sci. Signal.">
        <title>Quantitative phosphoproteomics reveals widespread full phosphorylation site occupancy during mitosis.</title>
        <authorList>
            <person name="Olsen J.V."/>
            <person name="Vermeulen M."/>
            <person name="Santamaria A."/>
            <person name="Kumar C."/>
            <person name="Miller M.L."/>
            <person name="Jensen L.J."/>
            <person name="Gnad F."/>
            <person name="Cox J."/>
            <person name="Jensen T.S."/>
            <person name="Nigg E.A."/>
            <person name="Brunak S."/>
            <person name="Mann M."/>
        </authorList>
    </citation>
    <scope>PHOSPHORYLATION [LARGE SCALE ANALYSIS] AT SER-106; THR-122; THR-141; SER-206; SER-273; SER-275; SER-434 AND THR-527</scope>
    <scope>IDENTIFICATION BY MASS SPECTROMETRY [LARGE SCALE ANALYSIS]</scope>
    <source>
        <tissue>Cervix carcinoma</tissue>
    </source>
</reference>
<reference key="24">
    <citation type="journal article" date="2011" name="BMC Syst. Biol.">
        <title>Initial characterization of the human central proteome.</title>
        <authorList>
            <person name="Burkard T.R."/>
            <person name="Planyavsky M."/>
            <person name="Kaupe I."/>
            <person name="Breitwieser F.P."/>
            <person name="Buerckstuemmer T."/>
            <person name="Bennett K.L."/>
            <person name="Superti-Furga G."/>
            <person name="Colinge J."/>
        </authorList>
    </citation>
    <scope>IDENTIFICATION BY MASS SPECTROMETRY [LARGE SCALE ANALYSIS]</scope>
</reference>
<reference key="25">
    <citation type="journal article" date="2011" name="Sci. Signal.">
        <title>System-wide temporal characterization of the proteome and phosphoproteome of human embryonic stem cell differentiation.</title>
        <authorList>
            <person name="Rigbolt K.T."/>
            <person name="Prokhorova T.A."/>
            <person name="Akimov V."/>
            <person name="Henningsen J."/>
            <person name="Johansen P.T."/>
            <person name="Kratchmarova I."/>
            <person name="Kassem M."/>
            <person name="Mann M."/>
            <person name="Olsen J.V."/>
            <person name="Blagoev B."/>
        </authorList>
    </citation>
    <scope>PHOSPHORYLATION [LARGE SCALE ANALYSIS] AT SER-129; THR-141; SER-177; SER-206; SER-275 AND THR-527</scope>
    <scope>IDENTIFICATION BY MASS SPECTROMETRY [LARGE SCALE ANALYSIS]</scope>
</reference>
<reference key="26">
    <citation type="journal article" date="2013" name="J. Proteome Res.">
        <title>Toward a comprehensive characterization of a human cancer cell phosphoproteome.</title>
        <authorList>
            <person name="Zhou H."/>
            <person name="Di Palma S."/>
            <person name="Preisinger C."/>
            <person name="Peng M."/>
            <person name="Polat A.N."/>
            <person name="Heck A.J."/>
            <person name="Mohammed S."/>
        </authorList>
    </citation>
    <scope>PHOSPHORYLATION [LARGE SCALE ANALYSIS] AT SER-106; THR-122; SER-129; SER-273; SER-275; SER-434 AND SER-514</scope>
    <scope>IDENTIFICATION BY MASS SPECTROMETRY [LARGE SCALE ANALYSIS]</scope>
    <source>
        <tissue>Cervix carcinoma</tissue>
        <tissue>Erythroleukemia</tissue>
    </source>
</reference>
<reference key="27">
    <citation type="journal article" date="2014" name="J. Proteomics">
        <title>An enzyme assisted RP-RPLC approach for in-depth analysis of human liver phosphoproteome.</title>
        <authorList>
            <person name="Bian Y."/>
            <person name="Song C."/>
            <person name="Cheng K."/>
            <person name="Dong M."/>
            <person name="Wang F."/>
            <person name="Huang J."/>
            <person name="Sun D."/>
            <person name="Wang L."/>
            <person name="Ye M."/>
            <person name="Zou H."/>
        </authorList>
    </citation>
    <scope>PHOSPHORYLATION [LARGE SCALE ANALYSIS] AT SER-106; THR-122; SER-129; SER-271; THR-272; SER-273 AND SER-275</scope>
    <scope>IDENTIFICATION BY MASS SPECTROMETRY [LARGE SCALE ANALYSIS]</scope>
    <source>
        <tissue>Liver</tissue>
    </source>
</reference>
<reference key="28">
    <citation type="journal article" date="2017" name="Nat. Struct. Mol. Biol.">
        <title>Site-specific mapping of the human SUMO proteome reveals co-modification with phosphorylation.</title>
        <authorList>
            <person name="Hendriks I.A."/>
            <person name="Lyon D."/>
            <person name="Young C."/>
            <person name="Jensen L.J."/>
            <person name="Vertegaal A.C."/>
            <person name="Nielsen M.L."/>
        </authorList>
    </citation>
    <scope>SUMOYLATION [LARGE SCALE ANALYSIS] AT LYS-75</scope>
    <scope>IDENTIFICATION BY MASS SPECTROMETRY [LARGE SCALE ANALYSIS]</scope>
</reference>
<reference key="29">
    <citation type="journal article" date="2005" name="Nat. Struct. Mol. Biol.">
        <title>Solution structure of the HIV-1 integrase-binding domain in LEDGF/p75.</title>
        <authorList>
            <person name="Cherepanov P."/>
            <person name="Sun Z.-Y."/>
            <person name="Rahman S."/>
            <person name="Maertens G."/>
            <person name="Wagner G."/>
            <person name="Engelman A."/>
        </authorList>
    </citation>
    <scope>STRUCTURE BY NMR OF 347-471</scope>
    <scope>SUBUNIT</scope>
    <scope>MUTAGENESIS OF ILE-365; ASP-366; PHE-406 AND VAL-408</scope>
    <scope>DOMAIN IBD</scope>
    <scope>INTERACTION WITH HIV-1 INTEGRASE (MICROBIAL INFECTION)</scope>
</reference>
<reference key="30">
    <citation type="journal article" date="2005" name="Proc. Natl. Acad. Sci. U.S.A.">
        <title>Structural basis for the recognition between HIV-1 integrase and transcriptional coactivator p75.</title>
        <authorList>
            <person name="Cherepanov P."/>
            <person name="Ambrosio A.L.B."/>
            <person name="Rahman S."/>
            <person name="Ellenberger T."/>
            <person name="Engelman A."/>
        </authorList>
    </citation>
    <scope>X-RAY CRYSTALLOGRAPHY (2.02 ANGSTROMS) OF 347-442 IN COMPLEX WITH HUMAN HIV-1 INTEGRASE</scope>
</reference>
<reference evidence="26" key="31">
    <citation type="journal article" date="2012" name="Nature">
        <title>The same pocket in menin binds both MLL and JUND but has opposite effects on transcription.</title>
        <authorList>
            <person name="Huang J."/>
            <person name="Gurung B."/>
            <person name="Wan B."/>
            <person name="Matkar S."/>
            <person name="Veniaminova N.A."/>
            <person name="Wan K."/>
            <person name="Merchant J.L."/>
            <person name="Hua X."/>
            <person name="Lei M."/>
        </authorList>
    </citation>
    <scope>X-RAY CRYSTALLOGRAPHY (3.00 ANGSTROMS) OF 347-435 IN COMPLEX WITH KMT2A AND MEN1</scope>
    <scope>INTERACTION WITH KMT2A-MENIN COMPLEX</scope>
</reference>
<reference evidence="25" key="32">
    <citation type="journal article" date="2014" name="Blood">
        <title>The same site on the integrase-binding domain of lens epithelium-derived growth factor is a therapeutic target for MLL leukemia and HIV.</title>
        <authorList>
            <person name="Murai M.J."/>
            <person name="Pollock J."/>
            <person name="He S."/>
            <person name="Miao H."/>
            <person name="Purohit T."/>
            <person name="Yokom A."/>
            <person name="Hess J.L."/>
            <person name="Muntean A.G."/>
            <person name="Grembecka J."/>
            <person name="Cierpicki T."/>
        </authorList>
    </citation>
    <scope>STRUCTURE BY NMR OF 337-442 IN COMPLEX WITH KMT2A</scope>
    <scope>INTERACTION WITH KMT2A; KMT2A-MEN1 COMPLEX AND FUSION PROTEIN KMT2A-MLLT3</scope>
    <scope>INTERACTION WITH HIV-1 INTEGRASE (MICROBIAL INFECTION)</scope>
</reference>
<reference evidence="24" key="33">
    <citation type="journal article" date="2014" name="Cancer Res.">
        <title>Validation and structural characterization of the LEDGF/p75-MLL interface as a new target for the treatment of MLL-dependent leukemia.</title>
        <authorList>
            <person name="Cermakova K."/>
            <person name="Tesina P."/>
            <person name="Demeulemeester J."/>
            <person name="El Ashkar S."/>
            <person name="Mereau H."/>
            <person name="Schwaller J."/>
            <person name="Rezacova P."/>
            <person name="Veverka V."/>
            <person name="De Rijck J."/>
        </authorList>
    </citation>
    <scope>STRUCTURE BY NMR OF 344-426 IN COMPLEX WITH KMT2A</scope>
    <scope>INTERACTION WITH KMT2A; CDCA7L AND POGZ</scope>
    <scope>INTERACTION WITH HIV-1 INTEGRASE (MICROBIAL INFECTION)</scope>
    <scope>MUTAGENESIS OF ASP-366; LEU-368; ARG-404; ARG-405 AND LYS-407</scope>
</reference>
<reference evidence="27 28 29 30 31" key="34">
    <citation type="journal article" date="2018" name="Proc. Natl. Acad. Sci. U.S.A.">
        <title>Affinity switching of the LEDGF/p75 IBD interactome is governed by kinase-dependent phosphorylation.</title>
        <authorList>
            <person name="Sharma S."/>
            <person name="Cermakova K."/>
            <person name="De Rijck J."/>
            <person name="Demeulemeester J."/>
            <person name="Fabry M."/>
            <person name="El Ashkar S."/>
            <person name="Van Belle S."/>
            <person name="Lepsik M."/>
            <person name="Tesina P."/>
            <person name="Duchoslav V."/>
            <person name="Novak P."/>
            <person name="Hubalek M."/>
            <person name="Srb P."/>
            <person name="Christ F."/>
            <person name="Rezacova P."/>
            <person name="Hodges H.C."/>
            <person name="Debyser Z."/>
            <person name="Veverka V."/>
        </authorList>
    </citation>
    <scope>STRUCTURE BY NMR OF 345-443 IN COMPLEX WITH KMT2A; CDCA7L; POGZ AND IWS1</scope>
    <scope>INTERACTION WITH KMT2A; CDCA7L; POGZ; IWS1; MED1 AND DBF4</scope>
</reference>
<proteinExistence type="evidence at protein level"/>
<gene>
    <name type="primary">PSIP1</name>
    <name type="synonym">DFS70</name>
    <name type="synonym">LEDGF</name>
    <name type="synonym">PSIP2</name>
</gene>
<feature type="chain" id="PRO_0000191708" description="PC4 and SFRS1-interacting protein">
    <location>
        <begin position="1"/>
        <end position="530"/>
    </location>
</feature>
<feature type="domain" description="PWWP" evidence="5">
    <location>
        <begin position="1"/>
        <end position="64"/>
    </location>
</feature>
<feature type="region of interest" description="Disordered" evidence="6">
    <location>
        <begin position="88"/>
        <end position="349"/>
    </location>
</feature>
<feature type="region of interest" description="Integrase-binding domain (IBD)" evidence="12">
    <location>
        <begin position="340"/>
        <end position="417"/>
    </location>
</feature>
<feature type="region of interest" description="Disordered" evidence="6">
    <location>
        <begin position="446"/>
        <end position="530"/>
    </location>
</feature>
<feature type="coiled-coil region" evidence="4">
    <location>
        <begin position="306"/>
        <end position="334"/>
    </location>
</feature>
<feature type="coiled-coil region" evidence="4">
    <location>
        <begin position="371"/>
        <end position="395"/>
    </location>
</feature>
<feature type="short sequence motif" description="Nuclear localization signal" evidence="11">
    <location>
        <begin position="146"/>
        <end position="156"/>
    </location>
</feature>
<feature type="compositionally biased region" description="Polar residues" evidence="6">
    <location>
        <begin position="92"/>
        <end position="104"/>
    </location>
</feature>
<feature type="compositionally biased region" description="Basic and acidic residues" evidence="6">
    <location>
        <begin position="113"/>
        <end position="135"/>
    </location>
</feature>
<feature type="compositionally biased region" description="Basic residues" evidence="6">
    <location>
        <begin position="144"/>
        <end position="153"/>
    </location>
</feature>
<feature type="compositionally biased region" description="Basic and acidic residues" evidence="6">
    <location>
        <begin position="213"/>
        <end position="261"/>
    </location>
</feature>
<feature type="compositionally biased region" description="Acidic residues" evidence="6">
    <location>
        <begin position="274"/>
        <end position="283"/>
    </location>
</feature>
<feature type="compositionally biased region" description="Basic residues" evidence="6">
    <location>
        <begin position="287"/>
        <end position="302"/>
    </location>
</feature>
<feature type="compositionally biased region" description="Basic and acidic residues" evidence="6">
    <location>
        <begin position="305"/>
        <end position="349"/>
    </location>
</feature>
<feature type="compositionally biased region" description="Basic and acidic residues" evidence="6">
    <location>
        <begin position="446"/>
        <end position="473"/>
    </location>
</feature>
<feature type="compositionally biased region" description="Polar residues" evidence="6">
    <location>
        <begin position="474"/>
        <end position="494"/>
    </location>
</feature>
<feature type="compositionally biased region" description="Basic and acidic residues" evidence="6">
    <location>
        <begin position="498"/>
        <end position="530"/>
    </location>
</feature>
<feature type="modified residue" description="Phosphoserine" evidence="2">
    <location>
        <position position="102"/>
    </location>
</feature>
<feature type="modified residue" description="Phosphoserine" evidence="3">
    <location>
        <position position="105"/>
    </location>
</feature>
<feature type="modified residue" description="Phosphoserine" evidence="34 36 38 39">
    <location>
        <position position="106"/>
    </location>
</feature>
<feature type="modified residue" description="Phosphothreonine" evidence="3">
    <location>
        <position position="115"/>
    </location>
</feature>
<feature type="modified residue" description="Phosphothreonine" evidence="32 36 38 39">
    <location>
        <position position="122"/>
    </location>
</feature>
<feature type="modified residue" description="Phosphoserine" evidence="37 38 39">
    <location>
        <position position="129"/>
    </location>
</feature>
<feature type="modified residue" description="Phosphothreonine" evidence="34 35 36 37">
    <location>
        <position position="141"/>
    </location>
</feature>
<feature type="modified residue" description="Phosphothreonine" evidence="35">
    <location>
        <position position="167"/>
    </location>
</feature>
<feature type="modified residue" description="Phosphoserine" evidence="35 37">
    <location>
        <position position="177"/>
    </location>
</feature>
<feature type="modified residue" description="Phosphoserine" evidence="36 37">
    <location>
        <position position="206"/>
    </location>
</feature>
<feature type="modified residue" description="Phosphoserine" evidence="39">
    <location>
        <position position="271"/>
    </location>
</feature>
<feature type="modified residue" description="Phosphothreonine" evidence="39">
    <location>
        <position position="272"/>
    </location>
</feature>
<feature type="modified residue" description="Phosphoserine" evidence="34 35 36 38 39">
    <location>
        <position position="273"/>
    </location>
</feature>
<feature type="modified residue" description="Phosphoserine" evidence="34 35 36 37 38 39">
    <location>
        <position position="275"/>
    </location>
</feature>
<feature type="modified residue" description="Phosphoserine" evidence="34 36 38">
    <location>
        <position position="434"/>
    </location>
</feature>
<feature type="modified residue" description="Phosphothreonine" evidence="33">
    <location>
        <position position="437"/>
    </location>
</feature>
<feature type="modified residue" description="Phosphoserine" evidence="34">
    <location>
        <position position="443"/>
    </location>
</feature>
<feature type="modified residue" description="Phosphoserine" evidence="38">
    <location>
        <position position="514"/>
    </location>
</feature>
<feature type="modified residue" description="Citrulline" evidence="1">
    <location>
        <position position="517"/>
    </location>
</feature>
<feature type="modified residue" description="Phosphoserine" evidence="34">
    <location>
        <position position="522"/>
    </location>
</feature>
<feature type="modified residue" description="Phosphothreonine" evidence="34 36 37">
    <location>
        <position position="527"/>
    </location>
</feature>
<feature type="cross-link" description="Glycyl lysine isopeptide (Lys-Gly) (interchain with G-Cter in SUMO2)" evidence="40">
    <location>
        <position position="75"/>
    </location>
</feature>
<feature type="splice variant" id="VSP_044435" description="In isoform 3." evidence="21">
    <original>QQNKDEGKKPEVKKVEKKRETSMDSRLQRIHAEIKNSLKIDNLDVNRCIEALDELASLQVTMQQAQKHTEMITTLKKIRRFKVSQVIMEKSTMLYNKFKNMFLVGEGDSVITQVLNKSLAEQRQHEEANKTKDQGKKGPNKKLEKEQTGSKTLNGGSDAQDGNQPQHNGESNEDSKDNHEASTKKKPSSEERETEISLKDSTLDN</original>
    <variation>HFAL</variation>
    <location>
        <begin position="326"/>
        <end position="530"/>
    </location>
</feature>
<feature type="splice variant" id="VSP_014297" description="In isoform 2." evidence="21 22">
    <original>QQNKDEGK</original>
    <variation>HQTTCNLQ</variation>
    <location>
        <begin position="326"/>
        <end position="333"/>
    </location>
</feature>
<feature type="splice variant" id="VSP_014298" description="In isoform 2." evidence="21 22">
    <location>
        <begin position="334"/>
        <end position="530"/>
    </location>
</feature>
<feature type="mutagenesis site" description="Reduced interaction with POGZ, CDCA7L and human HIV-1 integrase." evidence="14">
    <original>K</original>
    <variation>A</variation>
    <location>
        <position position="360"/>
    </location>
</feature>
<feature type="mutagenesis site" description="Loss of interaction with human HIV-1 integrase; reduced interaction with POGZ and CDCA7L." evidence="12 14">
    <original>I</original>
    <variation>A</variation>
    <location>
        <position position="365"/>
    </location>
</feature>
<feature type="mutagenesis site" description="Loss of interaction with human HIV-1 integrase; no effect on interaction with CDCA7L and POGZ." evidence="14">
    <original>D</original>
    <variation>A</variation>
    <location>
        <position position="366"/>
    </location>
</feature>
<feature type="mutagenesis site" description="Loss of interaction with human HIV-1 integrase; no effect on interaction with KMT2A." evidence="12 16">
    <original>D</original>
    <variation>N</variation>
    <location>
        <position position="366"/>
    </location>
</feature>
<feature type="mutagenesis site" description="Reduced interaction with KMT2A. Significant loss of interaction with KMT2A; when associated with D-407." evidence="16">
    <original>L</original>
    <variation>A</variation>
    <location>
        <position position="368"/>
    </location>
</feature>
<feature type="mutagenesis site" description="Reduced interaction with POGZ, CDCA7L and human HIV-1 integrase." evidence="14">
    <original>V</original>
    <variation>A</variation>
    <location>
        <position position="370"/>
    </location>
</feature>
<feature type="mutagenesis site" description="Significant loss of interaction with KMT2A; when associated with D-405." evidence="16">
    <original>R</original>
    <variation>D</variation>
    <location>
        <position position="404"/>
    </location>
</feature>
<feature type="mutagenesis site" description="Significant loss of interaction with KMT2A; when associated with D-404." evidence="16">
    <original>R</original>
    <variation>D</variation>
    <location>
        <position position="405"/>
    </location>
</feature>
<feature type="mutagenesis site" description="Loss of interaction with human HIV-1 integrase and POGZ; reduced interaction with CDCA7L." evidence="12 14">
    <original>F</original>
    <variation>A</variation>
    <location>
        <position position="406"/>
    </location>
</feature>
<feature type="mutagenesis site" description="Reduced interaction with KMT2A. Significant loss of interaction with KMT2A; when associated with A-368." evidence="16">
    <original>K</original>
    <variation>D</variation>
    <location>
        <position position="407"/>
    </location>
</feature>
<feature type="mutagenesis site" description="Reduced interaction with human HIV-1 integrase; no effect on interaction with POGZ and CDCA7L." evidence="12 14">
    <original>V</original>
    <variation>A</variation>
    <location>
        <position position="408"/>
    </location>
</feature>
<feature type="sequence conflict" description="In Ref. 7; AAH64135." evidence="23" ref="7">
    <location>
        <begin position="153"/>
        <end position="161"/>
    </location>
</feature>
<feature type="sequence conflict" description="In Ref. 1; AAC97946/AAC97945." evidence="23" ref="1">
    <original>E</original>
    <variation>G</variation>
    <location>
        <position position="224"/>
    </location>
</feature>
<feature type="sequence conflict" description="In Ref. 8; AAB52589." evidence="23" ref="8">
    <original>T</original>
    <variation>P</variation>
    <location>
        <position position="272"/>
    </location>
</feature>
<feature type="sequence conflict" description="In Ref. 1; AAC97946 and 8; AAB52589." evidence="23" ref="1 8">
    <original>Y</original>
    <variation>F</variation>
    <location>
        <position position="420"/>
    </location>
</feature>
<feature type="helix" evidence="43">
    <location>
        <begin position="2"/>
        <end position="4"/>
    </location>
</feature>
<feature type="strand" evidence="43">
    <location>
        <begin position="10"/>
        <end position="13"/>
    </location>
</feature>
<feature type="strand" evidence="43">
    <location>
        <begin position="21"/>
        <end position="25"/>
    </location>
</feature>
<feature type="strand" evidence="41">
    <location>
        <begin position="30"/>
        <end position="33"/>
    </location>
</feature>
<feature type="strand" evidence="45">
    <location>
        <begin position="37"/>
        <end position="39"/>
    </location>
</feature>
<feature type="strand" evidence="43">
    <location>
        <begin position="40"/>
        <end position="44"/>
    </location>
</feature>
<feature type="turn" evidence="43">
    <location>
        <begin position="45"/>
        <end position="47"/>
    </location>
</feature>
<feature type="strand" evidence="43">
    <location>
        <begin position="50"/>
        <end position="53"/>
    </location>
</feature>
<feature type="helix" evidence="43">
    <location>
        <begin position="55"/>
        <end position="57"/>
    </location>
</feature>
<feature type="strand" evidence="43">
    <location>
        <begin position="58"/>
        <end position="60"/>
    </location>
</feature>
<feature type="helix" evidence="43">
    <location>
        <begin position="61"/>
        <end position="68"/>
    </location>
</feature>
<feature type="helix" evidence="43">
    <location>
        <begin position="77"/>
        <end position="86"/>
    </location>
</feature>
<feature type="strand" evidence="48">
    <location>
        <begin position="87"/>
        <end position="89"/>
    </location>
</feature>
<feature type="helix" evidence="46">
    <location>
        <begin position="347"/>
        <end position="362"/>
    </location>
</feature>
<feature type="helix" evidence="42">
    <location>
        <begin position="365"/>
        <end position="367"/>
    </location>
</feature>
<feature type="helix" evidence="46">
    <location>
        <begin position="370"/>
        <end position="382"/>
    </location>
</feature>
<feature type="helix" evidence="46">
    <location>
        <begin position="387"/>
        <end position="390"/>
    </location>
</feature>
<feature type="helix" evidence="46">
    <location>
        <begin position="391"/>
        <end position="393"/>
    </location>
</feature>
<feature type="helix" evidence="46">
    <location>
        <begin position="394"/>
        <end position="403"/>
    </location>
</feature>
<feature type="helix" evidence="46">
    <location>
        <begin position="410"/>
        <end position="428"/>
    </location>
</feature>
<feature type="strand" evidence="44">
    <location>
        <begin position="430"/>
        <end position="432"/>
    </location>
</feature>
<feature type="helix" evidence="47">
    <location>
        <begin position="442"/>
        <end position="452"/>
    </location>
</feature>